<reference key="1">
    <citation type="journal article" date="2007" name="Toxicon">
        <title>Venomic analyses of Scolopendra viridicornis nigra and Scolopendra angulata (Centipede, Scolopendromorpha): shedding light on venoms from a neglected group.</title>
        <authorList>
            <person name="Rates B."/>
            <person name="Bemquerer M.P."/>
            <person name="Richardson M."/>
            <person name="Borges M.H."/>
            <person name="Morales R.A.V."/>
            <person name="De Lima M.E."/>
            <person name="Pimenta A.M.C."/>
        </authorList>
    </citation>
    <scope>PROTEIN SEQUENCE</scope>
    <scope>MASS SPECTROMETRY</scope>
    <scope>SUBCELLULAR LOCATION</scope>
    <source>
        <tissue>Venom</tissue>
    </source>
</reference>
<proteinExistence type="evidence at protein level"/>
<keyword id="KW-0903">Direct protein sequencing</keyword>
<keyword id="KW-0528">Neurotoxin</keyword>
<keyword id="KW-0964">Secreted</keyword>
<keyword id="KW-0800">Toxin</keyword>
<protein>
    <recommendedName>
        <fullName>Scolopendra 4511.92 Da toxin</fullName>
    </recommendedName>
</protein>
<dbReference type="GO" id="GO:0005576">
    <property type="term" value="C:extracellular region"/>
    <property type="evidence" value="ECO:0007669"/>
    <property type="project" value="UniProtKB-SubCell"/>
</dbReference>
<dbReference type="GO" id="GO:0090729">
    <property type="term" value="F:toxin activity"/>
    <property type="evidence" value="ECO:0007669"/>
    <property type="project" value="UniProtKB-KW"/>
</dbReference>
<feature type="chain" id="PRO_0000352851" description="Scolopendra 4511.92 Da toxin">
    <location>
        <begin position="1"/>
        <end position="13" status="greater than"/>
    </location>
</feature>
<feature type="non-terminal residue">
    <location>
        <position position="13"/>
    </location>
</feature>
<accession>P0C8B6</accession>
<evidence type="ECO:0000269" key="1">
    <source>
    </source>
</evidence>
<evidence type="ECO:0000305" key="2"/>
<evidence type="ECO:0000305" key="3">
    <source>
    </source>
</evidence>
<name>STX1_SCOAN</name>
<organism>
    <name type="scientific">Scolopendra angulata</name>
    <name type="common">Barbados giant red centipede</name>
    <dbReference type="NCBI Taxonomy" id="486498"/>
    <lineage>
        <taxon>Eukaryota</taxon>
        <taxon>Metazoa</taxon>
        <taxon>Ecdysozoa</taxon>
        <taxon>Arthropoda</taxon>
        <taxon>Myriapoda</taxon>
        <taxon>Chilopoda</taxon>
        <taxon>Pleurostigmophora</taxon>
        <taxon>Scolopendromorpha</taxon>
        <taxon>Scolopendridae</taxon>
        <taxon>Scolopendra</taxon>
    </lineage>
</organism>
<sequence>SETDSAXXGRNGQ</sequence>
<comment type="subcellular location">
    <subcellularLocation>
        <location evidence="1">Secreted</location>
    </subcellularLocation>
</comment>
<comment type="tissue specificity">
    <text evidence="3">Expressed by the venom gland.</text>
</comment>
<comment type="mass spectrometry"/>
<comment type="similarity">
    <text evidence="2">Belongs to the scolopendra toxin 1 family.</text>
</comment>